<sequence>MQIPSKLKPYYENIAFEQEDSKMIINLGPQHPSAHGNLRLILELDGEQVVKARPCIGYMHRGMEKMAENMIYQEFIPTTDRMDYIAASANNYAYCAAVEKLCGLEIPRRAAVIRMILLELNRITSHLLWLATHALDIGAMSVFLYCFREREYVLDLIEKYCGARLTHSSMRIGGVMLDLPENYLEEMLAFCDKFPNDLKDYEDLLDDNRIWRLRTENVGVVTKEQALNWGCTGVMLRGSGIKYDIRKEEPYLLYNEVEFGVPYATQGDSYARYKVYMQEFRESLKILRQCAMLYKDTSPEILATHPEYVSASKEQILTQNYSLMQHFVLITQGLKPPKGEVYVPTESPKGELGFFIHSDGTERPYRLKARTPSYWHCAFFEEMLVGTYLADVVAIMGNVNIVLGEIDR</sequence>
<organism>
    <name type="scientific">Campylobacter jejuni subsp. jejuni serotype O:23/36 (strain 81-176)</name>
    <dbReference type="NCBI Taxonomy" id="354242"/>
    <lineage>
        <taxon>Bacteria</taxon>
        <taxon>Pseudomonadati</taxon>
        <taxon>Campylobacterota</taxon>
        <taxon>Epsilonproteobacteria</taxon>
        <taxon>Campylobacterales</taxon>
        <taxon>Campylobacteraceae</taxon>
        <taxon>Campylobacter</taxon>
    </lineage>
</organism>
<gene>
    <name evidence="1" type="primary">nuoD</name>
    <name type="ordered locus">CJJ81176_1561</name>
</gene>
<feature type="chain" id="PRO_0000371848" description="NADH-quinone oxidoreductase subunit D">
    <location>
        <begin position="1"/>
        <end position="408"/>
    </location>
</feature>
<accession>A1W1H5</accession>
<keyword id="KW-0997">Cell inner membrane</keyword>
<keyword id="KW-1003">Cell membrane</keyword>
<keyword id="KW-0472">Membrane</keyword>
<keyword id="KW-0520">NAD</keyword>
<keyword id="KW-0874">Quinone</keyword>
<keyword id="KW-1278">Translocase</keyword>
<keyword id="KW-0813">Transport</keyword>
<keyword id="KW-0830">Ubiquinone</keyword>
<dbReference type="EC" id="7.1.1.-" evidence="1"/>
<dbReference type="EMBL" id="CP000538">
    <property type="protein sequence ID" value="EAQ72908.1"/>
    <property type="molecule type" value="Genomic_DNA"/>
</dbReference>
<dbReference type="RefSeq" id="WP_009883057.1">
    <property type="nucleotide sequence ID" value="NC_008787.1"/>
</dbReference>
<dbReference type="SMR" id="A1W1H5"/>
<dbReference type="KEGG" id="cjj:CJJ81176_1561"/>
<dbReference type="eggNOG" id="COG0649">
    <property type="taxonomic scope" value="Bacteria"/>
</dbReference>
<dbReference type="HOGENOM" id="CLU_015134_1_2_7"/>
<dbReference type="Proteomes" id="UP000000646">
    <property type="component" value="Chromosome"/>
</dbReference>
<dbReference type="GO" id="GO:0005886">
    <property type="term" value="C:plasma membrane"/>
    <property type="evidence" value="ECO:0007669"/>
    <property type="project" value="UniProtKB-SubCell"/>
</dbReference>
<dbReference type="GO" id="GO:0051287">
    <property type="term" value="F:NAD binding"/>
    <property type="evidence" value="ECO:0007669"/>
    <property type="project" value="InterPro"/>
</dbReference>
<dbReference type="GO" id="GO:0050136">
    <property type="term" value="F:NADH:ubiquinone reductase (non-electrogenic) activity"/>
    <property type="evidence" value="ECO:0007669"/>
    <property type="project" value="UniProtKB-UniRule"/>
</dbReference>
<dbReference type="GO" id="GO:0048038">
    <property type="term" value="F:quinone binding"/>
    <property type="evidence" value="ECO:0007669"/>
    <property type="project" value="UniProtKB-KW"/>
</dbReference>
<dbReference type="Gene3D" id="1.10.645.10">
    <property type="entry name" value="Cytochrome-c3 Hydrogenase, chain B"/>
    <property type="match status" value="1"/>
</dbReference>
<dbReference type="HAMAP" id="MF_01358">
    <property type="entry name" value="NDH1_NuoD"/>
    <property type="match status" value="1"/>
</dbReference>
<dbReference type="InterPro" id="IPR001135">
    <property type="entry name" value="NADH_Q_OxRdtase_suD"/>
</dbReference>
<dbReference type="InterPro" id="IPR022885">
    <property type="entry name" value="NDH1_su_D/H"/>
</dbReference>
<dbReference type="InterPro" id="IPR029014">
    <property type="entry name" value="NiFe-Hase_large"/>
</dbReference>
<dbReference type="NCBIfam" id="TIGR01962">
    <property type="entry name" value="NuoD"/>
    <property type="match status" value="1"/>
</dbReference>
<dbReference type="NCBIfam" id="NF004739">
    <property type="entry name" value="PRK06075.1"/>
    <property type="match status" value="1"/>
</dbReference>
<dbReference type="PANTHER" id="PTHR11993:SF10">
    <property type="entry name" value="NADH DEHYDROGENASE [UBIQUINONE] IRON-SULFUR PROTEIN 2, MITOCHONDRIAL"/>
    <property type="match status" value="1"/>
</dbReference>
<dbReference type="PANTHER" id="PTHR11993">
    <property type="entry name" value="NADH-UBIQUINONE OXIDOREDUCTASE 49 KDA SUBUNIT"/>
    <property type="match status" value="1"/>
</dbReference>
<dbReference type="Pfam" id="PF00346">
    <property type="entry name" value="Complex1_49kDa"/>
    <property type="match status" value="1"/>
</dbReference>
<dbReference type="SUPFAM" id="SSF56762">
    <property type="entry name" value="HydB/Nqo4-like"/>
    <property type="match status" value="1"/>
</dbReference>
<evidence type="ECO:0000255" key="1">
    <source>
        <dbReference type="HAMAP-Rule" id="MF_01358"/>
    </source>
</evidence>
<protein>
    <recommendedName>
        <fullName evidence="1">NADH-quinone oxidoreductase subunit D</fullName>
        <ecNumber evidence="1">7.1.1.-</ecNumber>
    </recommendedName>
    <alternativeName>
        <fullName evidence="1">NADH dehydrogenase I subunit D</fullName>
    </alternativeName>
    <alternativeName>
        <fullName evidence="1">NDH-1 subunit D</fullName>
    </alternativeName>
</protein>
<reference key="1">
    <citation type="submission" date="2006-12" db="EMBL/GenBank/DDBJ databases">
        <authorList>
            <person name="Fouts D.E."/>
            <person name="Nelson K.E."/>
            <person name="Sebastian Y."/>
        </authorList>
    </citation>
    <scope>NUCLEOTIDE SEQUENCE [LARGE SCALE GENOMIC DNA]</scope>
    <source>
        <strain>81-176</strain>
    </source>
</reference>
<name>NUOD_CAMJJ</name>
<proteinExistence type="inferred from homology"/>
<comment type="function">
    <text evidence="1">NDH-1 shuttles electrons from NADH, via FMN and iron-sulfur (Fe-S) centers, to quinones in the respiratory chain. The immediate electron acceptor for the enzyme in this species is believed to be ubiquinone. Couples the redox reaction to proton translocation (for every two electrons transferred, four hydrogen ions are translocated across the cytoplasmic membrane), and thus conserves the redox energy in a proton gradient.</text>
</comment>
<comment type="catalytic activity">
    <reaction evidence="1">
        <text>a quinone + NADH + 5 H(+)(in) = a quinol + NAD(+) + 4 H(+)(out)</text>
        <dbReference type="Rhea" id="RHEA:57888"/>
        <dbReference type="ChEBI" id="CHEBI:15378"/>
        <dbReference type="ChEBI" id="CHEBI:24646"/>
        <dbReference type="ChEBI" id="CHEBI:57540"/>
        <dbReference type="ChEBI" id="CHEBI:57945"/>
        <dbReference type="ChEBI" id="CHEBI:132124"/>
    </reaction>
</comment>
<comment type="subunit">
    <text evidence="1">NDH-1 is composed of 14 different subunits. Subunits NuoB, C, D, E, F, and G constitute the peripheral sector of the complex.</text>
</comment>
<comment type="subcellular location">
    <subcellularLocation>
        <location evidence="1">Cell inner membrane</location>
        <topology evidence="1">Peripheral membrane protein</topology>
        <orientation evidence="1">Cytoplasmic side</orientation>
    </subcellularLocation>
</comment>
<comment type="similarity">
    <text evidence="1">Belongs to the complex I 49 kDa subunit family.</text>
</comment>